<protein>
    <recommendedName>
        <fullName evidence="1">Lipopolysaccharide export system protein LptC</fullName>
    </recommendedName>
</protein>
<evidence type="ECO:0000255" key="1">
    <source>
        <dbReference type="HAMAP-Rule" id="MF_01915"/>
    </source>
</evidence>
<feature type="chain" id="PRO_0000169474" description="Lipopolysaccharide export system protein LptC">
    <location>
        <begin position="1"/>
        <end position="209"/>
    </location>
</feature>
<feature type="transmembrane region" description="Helical" evidence="1">
    <location>
        <begin position="7"/>
        <end position="26"/>
    </location>
</feature>
<comment type="function">
    <text evidence="1">Involved in the assembly of lipopolysaccharide (LPS). Required for the translocation of LPS from the inner membrane to the outer membrane. Facilitates the transfer of LPS from the inner membrane to the periplasmic protein LptA. Could be a docking site for LptA.</text>
</comment>
<comment type="subunit">
    <text evidence="1">Component of the lipopolysaccharide transport and assembly complex. Interacts with LptA and the LptBFG transporter complex.</text>
</comment>
<comment type="subcellular location">
    <subcellularLocation>
        <location evidence="1">Cell inner membrane</location>
        <topology evidence="1">Single-pass membrane protein</topology>
    </subcellularLocation>
</comment>
<comment type="similarity">
    <text evidence="1">Belongs to the LptC family.</text>
</comment>
<proteinExistence type="inferred from homology"/>
<sequence>MIEIKMNIRWNVILGVIALCALAWFYSLNQETADLSELVKKPDSPDYVGYKMETTVFSPDGKKQYLALSDKIEHYTVNEQTLFTAPLVYLYPTTSNEKEKEKNANQNVDFFSTQSWKLSANQARLTKDQILYLEGNVVAQNLTSDSRLQRIETESAVVNLKTQDITSETQVKIKGKNFSSTGLKLVGNLRQQVATLKEQVKTYYEVSKQ</sequence>
<name>LPTC_HAEIN</name>
<keyword id="KW-0997">Cell inner membrane</keyword>
<keyword id="KW-1003">Cell membrane</keyword>
<keyword id="KW-0472">Membrane</keyword>
<keyword id="KW-1185">Reference proteome</keyword>
<keyword id="KW-0812">Transmembrane</keyword>
<keyword id="KW-1133">Transmembrane helix</keyword>
<dbReference type="EMBL" id="L42023">
    <property type="protein sequence ID" value="AAC22805.1"/>
    <property type="molecule type" value="Genomic_DNA"/>
</dbReference>
<dbReference type="PIR" id="B64168">
    <property type="entry name" value="B64168"/>
</dbReference>
<dbReference type="RefSeq" id="NP_439308.2">
    <property type="nucleotide sequence ID" value="NC_000907.1"/>
</dbReference>
<dbReference type="SMR" id="P45075"/>
<dbReference type="STRING" id="71421.HI_1150"/>
<dbReference type="EnsemblBacteria" id="AAC22805">
    <property type="protein sequence ID" value="AAC22805"/>
    <property type="gene ID" value="HI_1150"/>
</dbReference>
<dbReference type="KEGG" id="hin:HI_1150"/>
<dbReference type="PATRIC" id="fig|71421.8.peg.1200"/>
<dbReference type="eggNOG" id="COG3117">
    <property type="taxonomic scope" value="Bacteria"/>
</dbReference>
<dbReference type="HOGENOM" id="CLU_105814_2_0_6"/>
<dbReference type="OrthoDB" id="5659892at2"/>
<dbReference type="PhylomeDB" id="P45075"/>
<dbReference type="Proteomes" id="UP000000579">
    <property type="component" value="Chromosome"/>
</dbReference>
<dbReference type="GO" id="GO:0030288">
    <property type="term" value="C:outer membrane-bounded periplasmic space"/>
    <property type="evidence" value="ECO:0000318"/>
    <property type="project" value="GO_Central"/>
</dbReference>
<dbReference type="GO" id="GO:0005886">
    <property type="term" value="C:plasma membrane"/>
    <property type="evidence" value="ECO:0000318"/>
    <property type="project" value="GO_Central"/>
</dbReference>
<dbReference type="GO" id="GO:0017089">
    <property type="term" value="F:glycolipid transfer activity"/>
    <property type="evidence" value="ECO:0000318"/>
    <property type="project" value="GO_Central"/>
</dbReference>
<dbReference type="GO" id="GO:0015221">
    <property type="term" value="F:lipopolysaccharide transmembrane transporter activity"/>
    <property type="evidence" value="ECO:0007669"/>
    <property type="project" value="InterPro"/>
</dbReference>
<dbReference type="GO" id="GO:0043165">
    <property type="term" value="P:Gram-negative-bacterium-type cell outer membrane assembly"/>
    <property type="evidence" value="ECO:0007669"/>
    <property type="project" value="UniProtKB-UniRule"/>
</dbReference>
<dbReference type="GO" id="GO:0015920">
    <property type="term" value="P:lipopolysaccharide transport"/>
    <property type="evidence" value="ECO:0000318"/>
    <property type="project" value="GO_Central"/>
</dbReference>
<dbReference type="FunFam" id="2.60.450.10:FF:000022">
    <property type="entry name" value="Lipopolysaccharide export system protein LptC"/>
    <property type="match status" value="1"/>
</dbReference>
<dbReference type="Gene3D" id="2.60.450.10">
    <property type="entry name" value="Lipopolysaccharide (LPS) transport protein A like domain"/>
    <property type="match status" value="1"/>
</dbReference>
<dbReference type="HAMAP" id="MF_01915">
    <property type="entry name" value="LPS_assembly_LptC"/>
    <property type="match status" value="1"/>
</dbReference>
<dbReference type="InterPro" id="IPR010664">
    <property type="entry name" value="LipoPS_assembly_LptC-rel"/>
</dbReference>
<dbReference type="InterPro" id="IPR052363">
    <property type="entry name" value="LPS_export_LptC"/>
</dbReference>
<dbReference type="InterPro" id="IPR026265">
    <property type="entry name" value="LptC"/>
</dbReference>
<dbReference type="NCBIfam" id="TIGR04409">
    <property type="entry name" value="LptC_YrbK"/>
    <property type="match status" value="1"/>
</dbReference>
<dbReference type="PANTHER" id="PTHR37481">
    <property type="entry name" value="LIPOPOLYSACCHARIDE EXPORT SYSTEM PROTEIN LPTC"/>
    <property type="match status" value="1"/>
</dbReference>
<dbReference type="PANTHER" id="PTHR37481:SF1">
    <property type="entry name" value="LIPOPOLYSACCHARIDE EXPORT SYSTEM PROTEIN LPTC"/>
    <property type="match status" value="1"/>
</dbReference>
<dbReference type="Pfam" id="PF06835">
    <property type="entry name" value="LptC"/>
    <property type="match status" value="1"/>
</dbReference>
<dbReference type="PIRSF" id="PIRSF028513">
    <property type="entry name" value="LptC"/>
    <property type="match status" value="1"/>
</dbReference>
<accession>P45075</accession>
<reference key="1">
    <citation type="journal article" date="1995" name="Science">
        <title>Whole-genome random sequencing and assembly of Haemophilus influenzae Rd.</title>
        <authorList>
            <person name="Fleischmann R.D."/>
            <person name="Adams M.D."/>
            <person name="White O."/>
            <person name="Clayton R.A."/>
            <person name="Kirkness E.F."/>
            <person name="Kerlavage A.R."/>
            <person name="Bult C.J."/>
            <person name="Tomb J.-F."/>
            <person name="Dougherty B.A."/>
            <person name="Merrick J.M."/>
            <person name="McKenney K."/>
            <person name="Sutton G.G."/>
            <person name="FitzHugh W."/>
            <person name="Fields C.A."/>
            <person name="Gocayne J.D."/>
            <person name="Scott J.D."/>
            <person name="Shirley R."/>
            <person name="Liu L.-I."/>
            <person name="Glodek A."/>
            <person name="Kelley J.M."/>
            <person name="Weidman J.F."/>
            <person name="Phillips C.A."/>
            <person name="Spriggs T."/>
            <person name="Hedblom E."/>
            <person name="Cotton M.D."/>
            <person name="Utterback T.R."/>
            <person name="Hanna M.C."/>
            <person name="Nguyen D.T."/>
            <person name="Saudek D.M."/>
            <person name="Brandon R.C."/>
            <person name="Fine L.D."/>
            <person name="Fritchman J.L."/>
            <person name="Fuhrmann J.L."/>
            <person name="Geoghagen N.S.M."/>
            <person name="Gnehm C.L."/>
            <person name="McDonald L.A."/>
            <person name="Small K.V."/>
            <person name="Fraser C.M."/>
            <person name="Smith H.O."/>
            <person name="Venter J.C."/>
        </authorList>
    </citation>
    <scope>NUCLEOTIDE SEQUENCE [LARGE SCALE GENOMIC DNA]</scope>
    <source>
        <strain>ATCC 51907 / DSM 11121 / KW20 / Rd</strain>
    </source>
</reference>
<organism>
    <name type="scientific">Haemophilus influenzae (strain ATCC 51907 / DSM 11121 / KW20 / Rd)</name>
    <dbReference type="NCBI Taxonomy" id="71421"/>
    <lineage>
        <taxon>Bacteria</taxon>
        <taxon>Pseudomonadati</taxon>
        <taxon>Pseudomonadota</taxon>
        <taxon>Gammaproteobacteria</taxon>
        <taxon>Pasteurellales</taxon>
        <taxon>Pasteurellaceae</taxon>
        <taxon>Haemophilus</taxon>
    </lineage>
</organism>
<gene>
    <name evidence="1" type="primary">lptC</name>
    <name type="ordered locus">HI_1150</name>
</gene>